<feature type="initiator methionine" description="Removed" evidence="2">
    <location>
        <position position="1"/>
    </location>
</feature>
<feature type="chain" id="PRO_0000302063" description="Mediator of RNA polymerase II transcription subunit 4">
    <location>
        <begin position="2"/>
        <end position="270"/>
    </location>
</feature>
<feature type="region of interest" description="Disordered" evidence="4">
    <location>
        <begin position="1"/>
        <end position="25"/>
    </location>
</feature>
<feature type="region of interest" description="Disordered" evidence="4">
    <location>
        <begin position="231"/>
        <end position="270"/>
    </location>
</feature>
<feature type="coiled-coil region" evidence="3">
    <location>
        <begin position="24"/>
        <end position="48"/>
    </location>
</feature>
<feature type="coiled-coil region" evidence="3">
    <location>
        <begin position="90"/>
        <end position="131"/>
    </location>
</feature>
<feature type="compositionally biased region" description="Basic and acidic residues" evidence="4">
    <location>
        <begin position="236"/>
        <end position="250"/>
    </location>
</feature>
<feature type="compositionally biased region" description="Low complexity" evidence="4">
    <location>
        <begin position="259"/>
        <end position="270"/>
    </location>
</feature>
<feature type="modified residue" description="N-acetylalanine" evidence="2">
    <location>
        <position position="2"/>
    </location>
</feature>
<feature type="modified residue" description="Phosphoserine" evidence="2">
    <location>
        <position position="32"/>
    </location>
</feature>
<dbReference type="EMBL" id="BC103312">
    <property type="protein sequence ID" value="AAI03313.1"/>
    <property type="molecule type" value="mRNA"/>
</dbReference>
<dbReference type="RefSeq" id="NP_001029658.1">
    <property type="nucleotide sequence ID" value="NM_001034486.1"/>
</dbReference>
<dbReference type="SMR" id="Q3SYZ9"/>
<dbReference type="FunCoup" id="Q3SYZ9">
    <property type="interactions" value="4512"/>
</dbReference>
<dbReference type="STRING" id="9913.ENSBTAP00000025979"/>
<dbReference type="PaxDb" id="9913-ENSBTAP00000025979"/>
<dbReference type="Ensembl" id="ENSBTAT00000025979.5">
    <property type="protein sequence ID" value="ENSBTAP00000025979.4"/>
    <property type="gene ID" value="ENSBTAG00000019502.5"/>
</dbReference>
<dbReference type="GeneID" id="515299"/>
<dbReference type="KEGG" id="bta:515299"/>
<dbReference type="CTD" id="29079"/>
<dbReference type="VEuPathDB" id="HostDB:ENSBTAG00000019502"/>
<dbReference type="VGNC" id="VGNC:31368">
    <property type="gene designation" value="MED4"/>
</dbReference>
<dbReference type="eggNOG" id="KOG4552">
    <property type="taxonomic scope" value="Eukaryota"/>
</dbReference>
<dbReference type="GeneTree" id="ENSGT00390000012063"/>
<dbReference type="HOGENOM" id="CLU_082233_0_0_1"/>
<dbReference type="InParanoid" id="Q3SYZ9"/>
<dbReference type="OMA" id="LEMRLGM"/>
<dbReference type="OrthoDB" id="1929813at2759"/>
<dbReference type="TreeFam" id="TF324421"/>
<dbReference type="Reactome" id="R-BTA-212436">
    <property type="pathway name" value="Generic Transcription Pathway"/>
</dbReference>
<dbReference type="Reactome" id="R-BTA-9841922">
    <property type="pathway name" value="MLL4 and MLL3 complexes regulate expression of PPARG target genes in adipogenesis and hepatic steatosis"/>
</dbReference>
<dbReference type="Proteomes" id="UP000009136">
    <property type="component" value="Chromosome 12"/>
</dbReference>
<dbReference type="Bgee" id="ENSBTAG00000019502">
    <property type="expression patterns" value="Expressed in oocyte and 104 other cell types or tissues"/>
</dbReference>
<dbReference type="GO" id="GO:0070847">
    <property type="term" value="C:core mediator complex"/>
    <property type="evidence" value="ECO:0000318"/>
    <property type="project" value="GO_Central"/>
</dbReference>
<dbReference type="GO" id="GO:0016592">
    <property type="term" value="C:mediator complex"/>
    <property type="evidence" value="ECO:0007669"/>
    <property type="project" value="Ensembl"/>
</dbReference>
<dbReference type="GO" id="GO:0005654">
    <property type="term" value="C:nucleoplasm"/>
    <property type="evidence" value="ECO:0007669"/>
    <property type="project" value="Ensembl"/>
</dbReference>
<dbReference type="GO" id="GO:0046966">
    <property type="term" value="F:nuclear thyroid hormone receptor binding"/>
    <property type="evidence" value="ECO:0007669"/>
    <property type="project" value="Ensembl"/>
</dbReference>
<dbReference type="GO" id="GO:0003713">
    <property type="term" value="F:transcription coactivator activity"/>
    <property type="evidence" value="ECO:0007669"/>
    <property type="project" value="Ensembl"/>
</dbReference>
<dbReference type="GO" id="GO:0003712">
    <property type="term" value="F:transcription coregulator activity"/>
    <property type="evidence" value="ECO:0000318"/>
    <property type="project" value="GO_Central"/>
</dbReference>
<dbReference type="GO" id="GO:0060261">
    <property type="term" value="P:positive regulation of transcription initiation by RNA polymerase II"/>
    <property type="evidence" value="ECO:0007669"/>
    <property type="project" value="Ensembl"/>
</dbReference>
<dbReference type="GO" id="GO:0006357">
    <property type="term" value="P:regulation of transcription by RNA polymerase II"/>
    <property type="evidence" value="ECO:0000318"/>
    <property type="project" value="GO_Central"/>
</dbReference>
<dbReference type="GO" id="GO:0006366">
    <property type="term" value="P:transcription by RNA polymerase II"/>
    <property type="evidence" value="ECO:0007669"/>
    <property type="project" value="Ensembl"/>
</dbReference>
<dbReference type="InterPro" id="IPR019258">
    <property type="entry name" value="Mediator_Med4"/>
</dbReference>
<dbReference type="PANTHER" id="PTHR13208">
    <property type="entry name" value="MEDIATOR OF RNA POLYMERASE II TRANSCRIPTION SUBUNIT 4"/>
    <property type="match status" value="1"/>
</dbReference>
<dbReference type="PANTHER" id="PTHR13208:SF2">
    <property type="entry name" value="MEDIATOR OF RNA POLYMERASE II TRANSCRIPTION SUBUNIT 4"/>
    <property type="match status" value="1"/>
</dbReference>
<dbReference type="Pfam" id="PF10018">
    <property type="entry name" value="Med4"/>
    <property type="match status" value="1"/>
</dbReference>
<organism>
    <name type="scientific">Bos taurus</name>
    <name type="common">Bovine</name>
    <dbReference type="NCBI Taxonomy" id="9913"/>
    <lineage>
        <taxon>Eukaryota</taxon>
        <taxon>Metazoa</taxon>
        <taxon>Chordata</taxon>
        <taxon>Craniata</taxon>
        <taxon>Vertebrata</taxon>
        <taxon>Euteleostomi</taxon>
        <taxon>Mammalia</taxon>
        <taxon>Eutheria</taxon>
        <taxon>Laurasiatheria</taxon>
        <taxon>Artiodactyla</taxon>
        <taxon>Ruminantia</taxon>
        <taxon>Pecora</taxon>
        <taxon>Bovidae</taxon>
        <taxon>Bovinae</taxon>
        <taxon>Bos</taxon>
    </lineage>
</organism>
<name>MED4_BOVIN</name>
<proteinExistence type="evidence at transcript level"/>
<protein>
    <recommendedName>
        <fullName>Mediator of RNA polymerase II transcription subunit 4</fullName>
    </recommendedName>
    <alternativeName>
        <fullName>Mediator complex subunit 4</fullName>
    </alternativeName>
</protein>
<keyword id="KW-0007">Acetylation</keyword>
<keyword id="KW-0010">Activator</keyword>
<keyword id="KW-0175">Coiled coil</keyword>
<keyword id="KW-0539">Nucleus</keyword>
<keyword id="KW-0597">Phosphoprotein</keyword>
<keyword id="KW-1185">Reference proteome</keyword>
<keyword id="KW-0804">Transcription</keyword>
<keyword id="KW-0805">Transcription regulation</keyword>
<accession>Q3SYZ9</accession>
<reference key="1">
    <citation type="submission" date="2005-08" db="EMBL/GenBank/DDBJ databases">
        <authorList>
            <consortium name="NIH - Mammalian Gene Collection (MGC) project"/>
        </authorList>
    </citation>
    <scope>NUCLEOTIDE SEQUENCE [LARGE SCALE MRNA]</scope>
    <source>
        <strain>Hereford</strain>
        <tissue>Uterus</tissue>
    </source>
</reference>
<comment type="function">
    <text evidence="1">Component of the Mediator complex, a coactivator involved in the regulated transcription of nearly all RNA polymerase II-dependent genes. Mediator functions as a bridge to convey information from gene-specific regulatory proteins to the basal RNA polymerase II transcription machinery. Mediator is recruited to promoters by direct interactions with regulatory proteins and serves as a scaffold for the assembly of a functional preinitiation complex with RNA polymerase II and the general transcription factors (By similarity).</text>
</comment>
<comment type="subunit">
    <text evidence="1">Component of the Mediator complex, which is composed of MED1, MED4, MED6, MED7, MED8, MED9, MED10, MED11, MED12, MED13, MED13L, MED14, MED15, MED16, MED17, MED18, MED19, MED20, MED21, MED22, MED23, MED24, MED25, MED26, MED27, MED29, MED30, MED31, CCNC, CDK8 and CDC2L6/CDK11. The MED12, MED13, CCNC and CDK8 subunits form a distinct module termed the CDK8 module. Mediator containing the CDK8 module is less active than Mediator lacking this module in supporting transcriptional activation. Individual preparations of the Mediator complex lacking one or more distinct subunits have been variously termed ARC, CRSP, DRIP, PC2, SMCC and TRAP (By similarity).</text>
</comment>
<comment type="subcellular location">
    <subcellularLocation>
        <location evidence="1">Nucleus</location>
    </subcellularLocation>
</comment>
<comment type="similarity">
    <text evidence="5">Belongs to the Mediator complex subunit 4 family.</text>
</comment>
<sequence>MAAASSGEKEKERPGGGLGAAGGNSTRERLLSALEDLEVLSRELIEMLAISRNQKLLQSGEENQVLELLIHRDGEFQELMKLALNQGKIHHEMQVLEKEVEKRDSDIQQLQKQLKEAEQILATAVYQAKEKLKSIEKARKGAISSEEIIKYAHRISASNAVCAPLTWVPGDPRRPYPTDLEMRSGLLGQMNNPSTNGVNGHLPGDALAAGRLPDVLAPQYPWQSNDMAMNMLPPNHSHDFLLEPPGHNKENEDDVEVMSTDSSSSSSDSD</sequence>
<evidence type="ECO:0000250" key="1"/>
<evidence type="ECO:0000250" key="2">
    <source>
        <dbReference type="UniProtKB" id="Q9NPJ6"/>
    </source>
</evidence>
<evidence type="ECO:0000255" key="3"/>
<evidence type="ECO:0000256" key="4">
    <source>
        <dbReference type="SAM" id="MobiDB-lite"/>
    </source>
</evidence>
<evidence type="ECO:0000305" key="5"/>
<gene>
    <name type="primary">MED4</name>
</gene>